<organism>
    <name type="scientific">Brucella anthropi (strain ATCC 49188 / DSM 6882 / CCUG 24695 / JCM 21032 / LMG 3331 / NBRC 15819 / NCTC 12168 / Alc 37)</name>
    <name type="common">Ochrobactrum anthropi</name>
    <dbReference type="NCBI Taxonomy" id="439375"/>
    <lineage>
        <taxon>Bacteria</taxon>
        <taxon>Pseudomonadati</taxon>
        <taxon>Pseudomonadota</taxon>
        <taxon>Alphaproteobacteria</taxon>
        <taxon>Hyphomicrobiales</taxon>
        <taxon>Brucellaceae</taxon>
        <taxon>Brucella/Ochrobactrum group</taxon>
        <taxon>Brucella</taxon>
    </lineage>
</organism>
<dbReference type="EMBL" id="CP000758">
    <property type="protein sequence ID" value="ABS13799.1"/>
    <property type="molecule type" value="Genomic_DNA"/>
</dbReference>
<dbReference type="RefSeq" id="WP_010661492.1">
    <property type="nucleotide sequence ID" value="NC_009667.1"/>
</dbReference>
<dbReference type="SMR" id="A6WXU5"/>
<dbReference type="STRING" id="439375.Oant_1079"/>
<dbReference type="GeneID" id="61318424"/>
<dbReference type="KEGG" id="oan:Oant_1079"/>
<dbReference type="eggNOG" id="COG0228">
    <property type="taxonomic scope" value="Bacteria"/>
</dbReference>
<dbReference type="HOGENOM" id="CLU_100590_3_1_5"/>
<dbReference type="PhylomeDB" id="A6WXU5"/>
<dbReference type="Proteomes" id="UP000002301">
    <property type="component" value="Chromosome 1"/>
</dbReference>
<dbReference type="GO" id="GO:0005737">
    <property type="term" value="C:cytoplasm"/>
    <property type="evidence" value="ECO:0007669"/>
    <property type="project" value="UniProtKB-ARBA"/>
</dbReference>
<dbReference type="GO" id="GO:0015935">
    <property type="term" value="C:small ribosomal subunit"/>
    <property type="evidence" value="ECO:0007669"/>
    <property type="project" value="TreeGrafter"/>
</dbReference>
<dbReference type="GO" id="GO:0003735">
    <property type="term" value="F:structural constituent of ribosome"/>
    <property type="evidence" value="ECO:0007669"/>
    <property type="project" value="InterPro"/>
</dbReference>
<dbReference type="GO" id="GO:0006412">
    <property type="term" value="P:translation"/>
    <property type="evidence" value="ECO:0007669"/>
    <property type="project" value="UniProtKB-UniRule"/>
</dbReference>
<dbReference type="Gene3D" id="3.30.1320.10">
    <property type="match status" value="1"/>
</dbReference>
<dbReference type="HAMAP" id="MF_00385">
    <property type="entry name" value="Ribosomal_bS16"/>
    <property type="match status" value="1"/>
</dbReference>
<dbReference type="InterPro" id="IPR000307">
    <property type="entry name" value="Ribosomal_bS16"/>
</dbReference>
<dbReference type="InterPro" id="IPR023803">
    <property type="entry name" value="Ribosomal_bS16_dom_sf"/>
</dbReference>
<dbReference type="NCBIfam" id="TIGR00002">
    <property type="entry name" value="S16"/>
    <property type="match status" value="1"/>
</dbReference>
<dbReference type="PANTHER" id="PTHR12919">
    <property type="entry name" value="30S RIBOSOMAL PROTEIN S16"/>
    <property type="match status" value="1"/>
</dbReference>
<dbReference type="PANTHER" id="PTHR12919:SF20">
    <property type="entry name" value="SMALL RIBOSOMAL SUBUNIT PROTEIN BS16M"/>
    <property type="match status" value="1"/>
</dbReference>
<dbReference type="Pfam" id="PF00886">
    <property type="entry name" value="Ribosomal_S16"/>
    <property type="match status" value="1"/>
</dbReference>
<dbReference type="SUPFAM" id="SSF54565">
    <property type="entry name" value="Ribosomal protein S16"/>
    <property type="match status" value="1"/>
</dbReference>
<gene>
    <name evidence="1" type="primary">rpsP</name>
    <name type="ordered locus">Oant_1079</name>
</gene>
<protein>
    <recommendedName>
        <fullName evidence="1">Small ribosomal subunit protein bS16</fullName>
    </recommendedName>
    <alternativeName>
        <fullName evidence="3">30S ribosomal protein S16</fullName>
    </alternativeName>
</protein>
<accession>A6WXU5</accession>
<name>RS16_BRUA4</name>
<sequence length="134" mass="14557">MSLKIRLARAGSKKRPYYHIVVADVRSPRDGRFIETVGAWNPMLAKDAERVKLDADRIQHWIAQGAQPTDRVLRFLDQAGLAKRPTRSNPTKGEPGKKAQERLAMAKQAEEEAAAKAAEAAAAAAAPAEEAASE</sequence>
<feature type="chain" id="PRO_1000049304" description="Small ribosomal subunit protein bS16">
    <location>
        <begin position="1"/>
        <end position="134"/>
    </location>
</feature>
<feature type="region of interest" description="Disordered" evidence="2">
    <location>
        <begin position="80"/>
        <end position="134"/>
    </location>
</feature>
<feature type="compositionally biased region" description="Low complexity" evidence="2">
    <location>
        <begin position="115"/>
        <end position="134"/>
    </location>
</feature>
<reference key="1">
    <citation type="journal article" date="2011" name="J. Bacteriol.">
        <title>Genome of Ochrobactrum anthropi ATCC 49188 T, a versatile opportunistic pathogen and symbiont of several eukaryotic hosts.</title>
        <authorList>
            <person name="Chain P.S."/>
            <person name="Lang D.M."/>
            <person name="Comerci D.J."/>
            <person name="Malfatti S.A."/>
            <person name="Vergez L.M."/>
            <person name="Shin M."/>
            <person name="Ugalde R.A."/>
            <person name="Garcia E."/>
            <person name="Tolmasky M.E."/>
        </authorList>
    </citation>
    <scope>NUCLEOTIDE SEQUENCE [LARGE SCALE GENOMIC DNA]</scope>
    <source>
        <strain>ATCC 49188 / DSM 6882 / CCUG 24695 / JCM 21032 / LMG 3331 / NBRC 15819 / NCTC 12168 / Alc 37</strain>
    </source>
</reference>
<keyword id="KW-1185">Reference proteome</keyword>
<keyword id="KW-0687">Ribonucleoprotein</keyword>
<keyword id="KW-0689">Ribosomal protein</keyword>
<evidence type="ECO:0000255" key="1">
    <source>
        <dbReference type="HAMAP-Rule" id="MF_00385"/>
    </source>
</evidence>
<evidence type="ECO:0000256" key="2">
    <source>
        <dbReference type="SAM" id="MobiDB-lite"/>
    </source>
</evidence>
<evidence type="ECO:0000305" key="3"/>
<comment type="similarity">
    <text evidence="1">Belongs to the bacterial ribosomal protein bS16 family.</text>
</comment>
<proteinExistence type="inferred from homology"/>